<keyword id="KW-0221">Differentiation</keyword>
<keyword id="KW-0238">DNA-binding</keyword>
<keyword id="KW-1017">Isopeptide bond</keyword>
<keyword id="KW-0539">Nucleus</keyword>
<keyword id="KW-0597">Phosphoprotein</keyword>
<keyword id="KW-1185">Reference proteome</keyword>
<keyword id="KW-0804">Transcription</keyword>
<keyword id="KW-0805">Transcription regulation</keyword>
<keyword id="KW-0832">Ubl conjugation</keyword>
<sequence length="377" mass="38918">MMASYPEPEDAAGALLAPETGRTAKEPEAPPPLSPGKGGGGGASTAPEKPDPAQKPPYSYVALIAMAIRESAEKRLTLSGIYQYIIAKFPFYEKNKKGWQNSIRHNLSLNECFIKVPREGGGERKGNYWTLDPACEDMFEKGNYRRRRRMKRPFRPPPAHFQPGKGLFGAGGAAGGCGVAGAGADGYGYLAPPKYLQSGFLNNSWPLPQPPSPMPYASCQMAAAAAAAAAAAAAAGPGSPGAAAVVKGLAGPAASYGPYSRVQSMALPPGVVNSYNGLGGPPAAPPPPPHPHSHPHAHHLHAAAAPPPAPPHHGAAAPPPGQLSPASPATAAPPAPAPTNAPGLQFACARQPELAMMHCSYWDHDSKTGALHSRLDL</sequence>
<evidence type="ECO:0000250" key="1"/>
<evidence type="ECO:0000250" key="2">
    <source>
        <dbReference type="UniProtKB" id="P58012"/>
    </source>
</evidence>
<evidence type="ECO:0000255" key="3">
    <source>
        <dbReference type="PROSITE-ProRule" id="PRU00089"/>
    </source>
</evidence>
<evidence type="ECO:0000256" key="4">
    <source>
        <dbReference type="SAM" id="MobiDB-lite"/>
    </source>
</evidence>
<accession>Q6VFT6</accession>
<comment type="function">
    <text evidence="1">Transcriptional regulator. Critical factor essential for ovary differentiation and maintenance, and repression of the genetic program for somatic testis determination (By similarity). Prevents trans-differentiation of ovary to testis through transcriptional repression of the Sertoli cell-promoting gene SOX9 (By similarity). Has apoptotic activity in ovarian cells (By similarity). Suppresses ESR1-mediated transcription of PTGS2/COX2 stimulated by tamoxifen (By similarity). Activates SIRT1 transcription under cellular stress conditions (By similarity). Activates transcription of OSR2 (By similarity). Is a regulator of CYP19 expression (By similarity). Is a transcriptional repressor of STAR (By similarity). Participates in SMAD3-dependent transcription of FST via the intronic SMAD-binding element (By similarity).</text>
</comment>
<comment type="subunit">
    <text evidence="1">Interacts with ESR1. Interacts with UBE2I/UBC9. Interacts with SMAD3. Interacts with DDX20.</text>
</comment>
<comment type="subcellular location">
    <subcellularLocation>
        <location evidence="3">Nucleus</location>
    </subcellularLocation>
</comment>
<comment type="PTM">
    <text evidence="1">Sumoylated with SUMO1; sumoylation is required for transcriptional repression activity.</text>
</comment>
<gene>
    <name type="primary">FOXL2</name>
</gene>
<protein>
    <recommendedName>
        <fullName>Forkhead box protein L2</fullName>
    </recommendedName>
</protein>
<reference key="1">
    <citation type="journal article" date="2003" name="Cytogenet. Genome Res.">
        <title>Structure, evolution and expression of the FOXL2 transcription unit.</title>
        <authorList>
            <person name="Cocquet J."/>
            <person name="De Baere E."/>
            <person name="Gareil M."/>
            <person name="Pannetier M."/>
            <person name="Xia X."/>
            <person name="Fellous M."/>
            <person name="Veitia R.A."/>
        </authorList>
    </citation>
    <scope>NUCLEOTIDE SEQUENCE [GENOMIC DNA]</scope>
</reference>
<organism>
    <name type="scientific">Sus scrofa</name>
    <name type="common">Pig</name>
    <dbReference type="NCBI Taxonomy" id="9823"/>
    <lineage>
        <taxon>Eukaryota</taxon>
        <taxon>Metazoa</taxon>
        <taxon>Chordata</taxon>
        <taxon>Craniata</taxon>
        <taxon>Vertebrata</taxon>
        <taxon>Euteleostomi</taxon>
        <taxon>Mammalia</taxon>
        <taxon>Eutheria</taxon>
        <taxon>Laurasiatheria</taxon>
        <taxon>Artiodactyla</taxon>
        <taxon>Suina</taxon>
        <taxon>Suidae</taxon>
        <taxon>Sus</taxon>
    </lineage>
</organism>
<name>FOXL2_PIG</name>
<dbReference type="EMBL" id="AY340971">
    <property type="protein sequence ID" value="AAQ91845.1"/>
    <property type="molecule type" value="Genomic_DNA"/>
</dbReference>
<dbReference type="RefSeq" id="NP_001231594.1">
    <property type="nucleotide sequence ID" value="NM_001244665.1"/>
</dbReference>
<dbReference type="SMR" id="Q6VFT6"/>
<dbReference type="FunCoup" id="Q6VFT6">
    <property type="interactions" value="6"/>
</dbReference>
<dbReference type="STRING" id="9823.ENSSSCP00000072025"/>
<dbReference type="PaxDb" id="9823-ENSSSCP00000019349"/>
<dbReference type="Ensembl" id="ENSSSCT00070016063.1">
    <property type="protein sequence ID" value="ENSSSCP00070013295.1"/>
    <property type="gene ID" value="ENSSSCG00070008330.1"/>
</dbReference>
<dbReference type="Ensembl" id="ENSSSCT00090060243">
    <property type="protein sequence ID" value="ENSSSCP00090037705"/>
    <property type="gene ID" value="ENSSSCG00090033987"/>
</dbReference>
<dbReference type="Ensembl" id="ENSSSCT00105066201">
    <property type="protein sequence ID" value="ENSSSCP00105047112"/>
    <property type="gene ID" value="ENSSSCG00105034714"/>
</dbReference>
<dbReference type="Ensembl" id="ENSSSCT00110074900">
    <property type="protein sequence ID" value="ENSSSCP00110052924"/>
    <property type="gene ID" value="ENSSSCG00110039218"/>
</dbReference>
<dbReference type="Ensembl" id="ENSSSCT00115036446">
    <property type="protein sequence ID" value="ENSSSCP00115034519"/>
    <property type="gene ID" value="ENSSSCG00115020562"/>
</dbReference>
<dbReference type="Ensembl" id="ENSSSCT00130066916">
    <property type="protein sequence ID" value="ENSSSCP00130048061"/>
    <property type="gene ID" value="ENSSSCG00130034218"/>
</dbReference>
<dbReference type="GeneID" id="100622956"/>
<dbReference type="KEGG" id="ssc:100622956"/>
<dbReference type="CTD" id="668"/>
<dbReference type="eggNOG" id="KOG2294">
    <property type="taxonomic scope" value="Eukaryota"/>
</dbReference>
<dbReference type="HOGENOM" id="CLU_023357_1_0_1"/>
<dbReference type="InParanoid" id="Q6VFT6"/>
<dbReference type="OrthoDB" id="6230630at2759"/>
<dbReference type="TreeFam" id="TF316127"/>
<dbReference type="Reactome" id="R-SSC-3232118">
    <property type="pathway name" value="SUMOylation of transcription factors"/>
</dbReference>
<dbReference type="Proteomes" id="UP000008227">
    <property type="component" value="Unplaced"/>
</dbReference>
<dbReference type="Proteomes" id="UP000314985">
    <property type="component" value="Chromosome 13"/>
</dbReference>
<dbReference type="Proteomes" id="UP000694570">
    <property type="component" value="Unplaced"/>
</dbReference>
<dbReference type="Proteomes" id="UP000694571">
    <property type="component" value="Unplaced"/>
</dbReference>
<dbReference type="Proteomes" id="UP000694720">
    <property type="component" value="Unplaced"/>
</dbReference>
<dbReference type="Proteomes" id="UP000694722">
    <property type="component" value="Unplaced"/>
</dbReference>
<dbReference type="Proteomes" id="UP000694723">
    <property type="component" value="Unplaced"/>
</dbReference>
<dbReference type="Proteomes" id="UP000694724">
    <property type="component" value="Unplaced"/>
</dbReference>
<dbReference type="Proteomes" id="UP000694725">
    <property type="component" value="Unplaced"/>
</dbReference>
<dbReference type="Proteomes" id="UP000694726">
    <property type="component" value="Unplaced"/>
</dbReference>
<dbReference type="Proteomes" id="UP000694727">
    <property type="component" value="Unplaced"/>
</dbReference>
<dbReference type="Proteomes" id="UP000694728">
    <property type="component" value="Unplaced"/>
</dbReference>
<dbReference type="GO" id="GO:0005634">
    <property type="term" value="C:nucleus"/>
    <property type="evidence" value="ECO:0000250"/>
    <property type="project" value="AgBase"/>
</dbReference>
<dbReference type="GO" id="GO:0043028">
    <property type="term" value="F:cysteine-type endopeptidase regulator activity involved in apoptotic process"/>
    <property type="evidence" value="ECO:0000250"/>
    <property type="project" value="UniProtKB"/>
</dbReference>
<dbReference type="GO" id="GO:0003677">
    <property type="term" value="F:DNA binding"/>
    <property type="evidence" value="ECO:0000250"/>
    <property type="project" value="AgBase"/>
</dbReference>
<dbReference type="GO" id="GO:0003700">
    <property type="term" value="F:DNA-binding transcription factor activity"/>
    <property type="evidence" value="ECO:0000250"/>
    <property type="project" value="AgBase"/>
</dbReference>
<dbReference type="GO" id="GO:0000981">
    <property type="term" value="F:DNA-binding transcription factor activity, RNA polymerase II-specific"/>
    <property type="evidence" value="ECO:0000318"/>
    <property type="project" value="GO_Central"/>
</dbReference>
<dbReference type="GO" id="GO:0000978">
    <property type="term" value="F:RNA polymerase II cis-regulatory region sequence-specific DNA binding"/>
    <property type="evidence" value="ECO:0000318"/>
    <property type="project" value="GO_Central"/>
</dbReference>
<dbReference type="GO" id="GO:0009653">
    <property type="term" value="P:anatomical structure morphogenesis"/>
    <property type="evidence" value="ECO:0000318"/>
    <property type="project" value="GO_Central"/>
</dbReference>
<dbReference type="GO" id="GO:0006309">
    <property type="term" value="P:apoptotic DNA fragmentation"/>
    <property type="evidence" value="ECO:0000250"/>
    <property type="project" value="UniProtKB"/>
</dbReference>
<dbReference type="GO" id="GO:0030154">
    <property type="term" value="P:cell differentiation"/>
    <property type="evidence" value="ECO:0000318"/>
    <property type="project" value="GO_Central"/>
</dbReference>
<dbReference type="GO" id="GO:0048048">
    <property type="term" value="P:embryonic eye morphogenesis"/>
    <property type="evidence" value="ECO:0000250"/>
    <property type="project" value="AgBase"/>
</dbReference>
<dbReference type="GO" id="GO:0002074">
    <property type="term" value="P:extraocular skeletal muscle development"/>
    <property type="evidence" value="ECO:0000250"/>
    <property type="project" value="UniProtKB"/>
</dbReference>
<dbReference type="GO" id="GO:0019101">
    <property type="term" value="P:female somatic sex determination"/>
    <property type="evidence" value="ECO:0000250"/>
    <property type="project" value="AgBase"/>
</dbReference>
<dbReference type="GO" id="GO:0060014">
    <property type="term" value="P:granulosa cell differentiation"/>
    <property type="evidence" value="ECO:0000250"/>
    <property type="project" value="AgBase"/>
</dbReference>
<dbReference type="GO" id="GO:0001541">
    <property type="term" value="P:ovarian follicle development"/>
    <property type="evidence" value="ECO:0000250"/>
    <property type="project" value="AgBase"/>
</dbReference>
<dbReference type="GO" id="GO:0043065">
    <property type="term" value="P:positive regulation of apoptotic process"/>
    <property type="evidence" value="ECO:0000250"/>
    <property type="project" value="UniProtKB"/>
</dbReference>
<dbReference type="GO" id="GO:0045893">
    <property type="term" value="P:positive regulation of DNA-templated transcription"/>
    <property type="evidence" value="ECO:0000250"/>
    <property type="project" value="UniProtKB"/>
</dbReference>
<dbReference type="GO" id="GO:0045944">
    <property type="term" value="P:positive regulation of transcription by RNA polymerase II"/>
    <property type="evidence" value="ECO:0000250"/>
    <property type="project" value="AgBase"/>
</dbReference>
<dbReference type="GO" id="GO:0006357">
    <property type="term" value="P:regulation of transcription by RNA polymerase II"/>
    <property type="evidence" value="ECO:0000318"/>
    <property type="project" value="GO_Central"/>
</dbReference>
<dbReference type="CDD" id="cd20028">
    <property type="entry name" value="FH_FOXL2"/>
    <property type="match status" value="1"/>
</dbReference>
<dbReference type="FunFam" id="1.10.10.10:FF:000016">
    <property type="entry name" value="Forkhead box protein I1"/>
    <property type="match status" value="1"/>
</dbReference>
<dbReference type="Gene3D" id="1.10.10.10">
    <property type="entry name" value="Winged helix-like DNA-binding domain superfamily/Winged helix DNA-binding domain"/>
    <property type="match status" value="1"/>
</dbReference>
<dbReference type="InterPro" id="IPR047515">
    <property type="entry name" value="FH_FOXL2"/>
</dbReference>
<dbReference type="InterPro" id="IPR001766">
    <property type="entry name" value="Fork_head_dom"/>
</dbReference>
<dbReference type="InterPro" id="IPR050211">
    <property type="entry name" value="FOX_domain-containing"/>
</dbReference>
<dbReference type="InterPro" id="IPR018122">
    <property type="entry name" value="TF_fork_head_CS_1"/>
</dbReference>
<dbReference type="InterPro" id="IPR030456">
    <property type="entry name" value="TF_fork_head_CS_2"/>
</dbReference>
<dbReference type="InterPro" id="IPR036388">
    <property type="entry name" value="WH-like_DNA-bd_sf"/>
</dbReference>
<dbReference type="InterPro" id="IPR036390">
    <property type="entry name" value="WH_DNA-bd_sf"/>
</dbReference>
<dbReference type="PANTHER" id="PTHR11829">
    <property type="entry name" value="FORKHEAD BOX PROTEIN"/>
    <property type="match status" value="1"/>
</dbReference>
<dbReference type="PANTHER" id="PTHR11829:SF411">
    <property type="entry name" value="FORKHEAD BOX PROTEIN L2"/>
    <property type="match status" value="1"/>
</dbReference>
<dbReference type="Pfam" id="PF00250">
    <property type="entry name" value="Forkhead"/>
    <property type="match status" value="1"/>
</dbReference>
<dbReference type="PRINTS" id="PR00053">
    <property type="entry name" value="FORKHEAD"/>
</dbReference>
<dbReference type="SMART" id="SM00339">
    <property type="entry name" value="FH"/>
    <property type="match status" value="1"/>
</dbReference>
<dbReference type="SUPFAM" id="SSF46785">
    <property type="entry name" value="Winged helix' DNA-binding domain"/>
    <property type="match status" value="1"/>
</dbReference>
<dbReference type="PROSITE" id="PS00657">
    <property type="entry name" value="FORK_HEAD_1"/>
    <property type="match status" value="1"/>
</dbReference>
<dbReference type="PROSITE" id="PS00658">
    <property type="entry name" value="FORK_HEAD_2"/>
    <property type="match status" value="1"/>
</dbReference>
<dbReference type="PROSITE" id="PS50039">
    <property type="entry name" value="FORK_HEAD_3"/>
    <property type="match status" value="1"/>
</dbReference>
<proteinExistence type="inferred from homology"/>
<feature type="chain" id="PRO_0000246179" description="Forkhead box protein L2">
    <location>
        <begin position="1"/>
        <end position="377"/>
    </location>
</feature>
<feature type="DNA-binding region" description="Fork-head" evidence="3">
    <location>
        <begin position="55"/>
        <end position="149"/>
    </location>
</feature>
<feature type="region of interest" description="Disordered" evidence="4">
    <location>
        <begin position="1"/>
        <end position="54"/>
    </location>
</feature>
<feature type="region of interest" description="Disordered" evidence="4">
    <location>
        <begin position="277"/>
        <end position="338"/>
    </location>
</feature>
<feature type="compositionally biased region" description="Basic residues" evidence="4">
    <location>
        <begin position="291"/>
        <end position="301"/>
    </location>
</feature>
<feature type="compositionally biased region" description="Pro residues" evidence="4">
    <location>
        <begin position="305"/>
        <end position="322"/>
    </location>
</feature>
<feature type="modified residue" description="Phosphoserine" evidence="2">
    <location>
        <position position="34"/>
    </location>
</feature>
<feature type="cross-link" description="Glycyl lysine isopeptide (Lys-Gly) (interchain with G-Cter in SUMO)" evidence="1">
    <location>
        <position position="25"/>
    </location>
</feature>